<accession>P0A6K2</accession>
<accession>P08885</accession>
<accession>P78126</accession>
<accession>Q8X8P8</accession>
<comment type="function">
    <text evidence="1">Catalyzes the stereoinversion of LL-2,6-diaminopimelate (L,L-DAP) to meso-diaminopimelate (meso-DAP), a precursor of L-lysine and an essential component of the bacterial peptidoglycan.</text>
</comment>
<comment type="catalytic activity">
    <reaction evidence="1">
        <text>(2S,6S)-2,6-diaminopimelate = meso-2,6-diaminopimelate</text>
        <dbReference type="Rhea" id="RHEA:15393"/>
        <dbReference type="ChEBI" id="CHEBI:57609"/>
        <dbReference type="ChEBI" id="CHEBI:57791"/>
        <dbReference type="EC" id="5.1.1.7"/>
    </reaction>
</comment>
<comment type="pathway">
    <text evidence="1">Amino-acid biosynthesis; L-lysine biosynthesis via DAP pathway; DL-2,6-diaminopimelate from LL-2,6-diaminopimelate: step 1/1.</text>
</comment>
<comment type="subunit">
    <text evidence="1">Homodimer.</text>
</comment>
<comment type="subcellular location">
    <subcellularLocation>
        <location evidence="1">Cytoplasm</location>
    </subcellularLocation>
</comment>
<comment type="similarity">
    <text evidence="1">Belongs to the diaminopimelate epimerase family.</text>
</comment>
<comment type="sequence caution" evidence="2">
    <conflict type="erroneous initiation">
        <sequence resource="EMBL-CDS" id="AAG59002"/>
    </conflict>
    <text>Extended N-terminus.</text>
</comment>
<name>DAPF_ECO57</name>
<evidence type="ECO:0000255" key="1">
    <source>
        <dbReference type="HAMAP-Rule" id="MF_00197"/>
    </source>
</evidence>
<evidence type="ECO:0000305" key="2"/>
<proteinExistence type="inferred from homology"/>
<dbReference type="EC" id="5.1.1.7" evidence="1"/>
<dbReference type="EMBL" id="AE005174">
    <property type="protein sequence ID" value="AAG59002.1"/>
    <property type="status" value="ALT_INIT"/>
    <property type="molecule type" value="Genomic_DNA"/>
</dbReference>
<dbReference type="EMBL" id="BA000007">
    <property type="protein sequence ID" value="BAB38162.2"/>
    <property type="molecule type" value="Genomic_DNA"/>
</dbReference>
<dbReference type="RefSeq" id="NP_312766.2">
    <property type="nucleotide sequence ID" value="NC_002695.1"/>
</dbReference>
<dbReference type="RefSeq" id="WP_001160654.1">
    <property type="nucleotide sequence ID" value="NZ_VOAI01000017.1"/>
</dbReference>
<dbReference type="SMR" id="P0A6K2"/>
<dbReference type="STRING" id="155864.Z5326"/>
<dbReference type="GeneID" id="915186"/>
<dbReference type="GeneID" id="93778134"/>
<dbReference type="KEGG" id="ece:Z5326"/>
<dbReference type="KEGG" id="ecs:ECs_4739"/>
<dbReference type="PATRIC" id="fig|386585.9.peg.4946"/>
<dbReference type="eggNOG" id="COG0253">
    <property type="taxonomic scope" value="Bacteria"/>
</dbReference>
<dbReference type="HOGENOM" id="CLU_053306_1_1_6"/>
<dbReference type="OMA" id="GIRCFAR"/>
<dbReference type="UniPathway" id="UPA00034">
    <property type="reaction ID" value="UER00025"/>
</dbReference>
<dbReference type="Proteomes" id="UP000000558">
    <property type="component" value="Chromosome"/>
</dbReference>
<dbReference type="Proteomes" id="UP000002519">
    <property type="component" value="Chromosome"/>
</dbReference>
<dbReference type="GO" id="GO:0005829">
    <property type="term" value="C:cytosol"/>
    <property type="evidence" value="ECO:0007669"/>
    <property type="project" value="TreeGrafter"/>
</dbReference>
<dbReference type="GO" id="GO:0008837">
    <property type="term" value="F:diaminopimelate epimerase activity"/>
    <property type="evidence" value="ECO:0007669"/>
    <property type="project" value="UniProtKB-UniRule"/>
</dbReference>
<dbReference type="GO" id="GO:0009089">
    <property type="term" value="P:lysine biosynthetic process via diaminopimelate"/>
    <property type="evidence" value="ECO:0007669"/>
    <property type="project" value="UniProtKB-UniRule"/>
</dbReference>
<dbReference type="FunFam" id="3.10.310.10:FF:000001">
    <property type="entry name" value="Diaminopimelate epimerase"/>
    <property type="match status" value="1"/>
</dbReference>
<dbReference type="FunFam" id="3.10.310.10:FF:000002">
    <property type="entry name" value="Diaminopimelate epimerase"/>
    <property type="match status" value="1"/>
</dbReference>
<dbReference type="Gene3D" id="3.10.310.10">
    <property type="entry name" value="Diaminopimelate Epimerase, Chain A, domain 1"/>
    <property type="match status" value="2"/>
</dbReference>
<dbReference type="HAMAP" id="MF_00197">
    <property type="entry name" value="DAP_epimerase"/>
    <property type="match status" value="1"/>
</dbReference>
<dbReference type="InterPro" id="IPR018510">
    <property type="entry name" value="DAP_epimerase_AS"/>
</dbReference>
<dbReference type="InterPro" id="IPR001653">
    <property type="entry name" value="DAP_epimerase_DapF"/>
</dbReference>
<dbReference type="NCBIfam" id="TIGR00652">
    <property type="entry name" value="DapF"/>
    <property type="match status" value="1"/>
</dbReference>
<dbReference type="PANTHER" id="PTHR31689:SF0">
    <property type="entry name" value="DIAMINOPIMELATE EPIMERASE"/>
    <property type="match status" value="1"/>
</dbReference>
<dbReference type="PANTHER" id="PTHR31689">
    <property type="entry name" value="DIAMINOPIMELATE EPIMERASE, CHLOROPLASTIC"/>
    <property type="match status" value="1"/>
</dbReference>
<dbReference type="Pfam" id="PF01678">
    <property type="entry name" value="DAP_epimerase"/>
    <property type="match status" value="2"/>
</dbReference>
<dbReference type="SUPFAM" id="SSF54506">
    <property type="entry name" value="Diaminopimelate epimerase-like"/>
    <property type="match status" value="1"/>
</dbReference>
<dbReference type="PROSITE" id="PS01326">
    <property type="entry name" value="DAP_EPIMERASE"/>
    <property type="match status" value="1"/>
</dbReference>
<reference key="1">
    <citation type="journal article" date="2001" name="Nature">
        <title>Genome sequence of enterohaemorrhagic Escherichia coli O157:H7.</title>
        <authorList>
            <person name="Perna N.T."/>
            <person name="Plunkett G. III"/>
            <person name="Burland V."/>
            <person name="Mau B."/>
            <person name="Glasner J.D."/>
            <person name="Rose D.J."/>
            <person name="Mayhew G.F."/>
            <person name="Evans P.S."/>
            <person name="Gregor J."/>
            <person name="Kirkpatrick H.A."/>
            <person name="Posfai G."/>
            <person name="Hackett J."/>
            <person name="Klink S."/>
            <person name="Boutin A."/>
            <person name="Shao Y."/>
            <person name="Miller L."/>
            <person name="Grotbeck E.J."/>
            <person name="Davis N.W."/>
            <person name="Lim A."/>
            <person name="Dimalanta E.T."/>
            <person name="Potamousis K."/>
            <person name="Apodaca J."/>
            <person name="Anantharaman T.S."/>
            <person name="Lin J."/>
            <person name="Yen G."/>
            <person name="Schwartz D.C."/>
            <person name="Welch R.A."/>
            <person name="Blattner F.R."/>
        </authorList>
    </citation>
    <scope>NUCLEOTIDE SEQUENCE [LARGE SCALE GENOMIC DNA]</scope>
    <source>
        <strain>O157:H7 / EDL933 / ATCC 700927 / EHEC</strain>
    </source>
</reference>
<reference key="2">
    <citation type="journal article" date="2001" name="DNA Res.">
        <title>Complete genome sequence of enterohemorrhagic Escherichia coli O157:H7 and genomic comparison with a laboratory strain K-12.</title>
        <authorList>
            <person name="Hayashi T."/>
            <person name="Makino K."/>
            <person name="Ohnishi M."/>
            <person name="Kurokawa K."/>
            <person name="Ishii K."/>
            <person name="Yokoyama K."/>
            <person name="Han C.-G."/>
            <person name="Ohtsubo E."/>
            <person name="Nakayama K."/>
            <person name="Murata T."/>
            <person name="Tanaka M."/>
            <person name="Tobe T."/>
            <person name="Iida T."/>
            <person name="Takami H."/>
            <person name="Honda T."/>
            <person name="Sasakawa C."/>
            <person name="Ogasawara N."/>
            <person name="Yasunaga T."/>
            <person name="Kuhara S."/>
            <person name="Shiba T."/>
            <person name="Hattori M."/>
            <person name="Shinagawa H."/>
        </authorList>
    </citation>
    <scope>NUCLEOTIDE SEQUENCE [LARGE SCALE GENOMIC DNA]</scope>
    <source>
        <strain>O157:H7 / Sakai / RIMD 0509952 / EHEC</strain>
    </source>
</reference>
<keyword id="KW-0028">Amino-acid biosynthesis</keyword>
<keyword id="KW-0963">Cytoplasm</keyword>
<keyword id="KW-0413">Isomerase</keyword>
<keyword id="KW-0457">Lysine biosynthesis</keyword>
<keyword id="KW-1185">Reference proteome</keyword>
<feature type="chain" id="PRO_0000149839" description="Diaminopimelate epimerase">
    <location>
        <begin position="1"/>
        <end position="274"/>
    </location>
</feature>
<feature type="active site" description="Proton donor" evidence="1">
    <location>
        <position position="73"/>
    </location>
</feature>
<feature type="active site" description="Proton acceptor" evidence="1">
    <location>
        <position position="217"/>
    </location>
</feature>
<feature type="binding site" evidence="1">
    <location>
        <position position="11"/>
    </location>
    <ligand>
        <name>substrate</name>
    </ligand>
</feature>
<feature type="binding site" evidence="1">
    <location>
        <position position="44"/>
    </location>
    <ligand>
        <name>substrate</name>
    </ligand>
</feature>
<feature type="binding site" evidence="1">
    <location>
        <position position="64"/>
    </location>
    <ligand>
        <name>substrate</name>
    </ligand>
</feature>
<feature type="binding site" evidence="1">
    <location>
        <begin position="74"/>
        <end position="75"/>
    </location>
    <ligand>
        <name>substrate</name>
    </ligand>
</feature>
<feature type="binding site" evidence="1">
    <location>
        <position position="157"/>
    </location>
    <ligand>
        <name>substrate</name>
    </ligand>
</feature>
<feature type="binding site" evidence="1">
    <location>
        <position position="190"/>
    </location>
    <ligand>
        <name>substrate</name>
    </ligand>
</feature>
<feature type="binding site" evidence="1">
    <location>
        <begin position="208"/>
        <end position="209"/>
    </location>
    <ligand>
        <name>substrate</name>
    </ligand>
</feature>
<feature type="binding site" evidence="1">
    <location>
        <begin position="218"/>
        <end position="219"/>
    </location>
    <ligand>
        <name>substrate</name>
    </ligand>
</feature>
<feature type="site" description="Could be important to modulate the pK values of the two catalytic cysteine residues" evidence="1">
    <location>
        <position position="159"/>
    </location>
</feature>
<feature type="site" description="Could be important to modulate the pK values of the two catalytic cysteine residues" evidence="1">
    <location>
        <position position="208"/>
    </location>
</feature>
<feature type="site" description="Important for dimerization" evidence="1">
    <location>
        <position position="268"/>
    </location>
</feature>
<gene>
    <name evidence="1" type="primary">dapF</name>
    <name type="ordered locus">Z5326</name>
    <name type="ordered locus">ECs4739</name>
</gene>
<sequence length="274" mass="30209">MQFSKMHGLGNDFMVVDAVTQNVFFSPELIRRLADRHLGVGFDQLLVVEPPYDPELDFHYRIFNADGSEVAQCGNGARCFARFVRLKGLTNKRDIRVSTANGRMVLTVTDDDLVRVNMGEPNFEPSAVPFRANKAEKTYIMRAAEQTILCGVVSMGNPHCVIQVDDVDTAAVETLGPVLESHERFPERANIGFMQVVKREHIRLRVYERGAGETQACGSGACAAVAVGIQQGLLAEEVRVELPGGRLDIAWKGPGHPLYMTGPAVHVYDGFIHL</sequence>
<organism>
    <name type="scientific">Escherichia coli O157:H7</name>
    <dbReference type="NCBI Taxonomy" id="83334"/>
    <lineage>
        <taxon>Bacteria</taxon>
        <taxon>Pseudomonadati</taxon>
        <taxon>Pseudomonadota</taxon>
        <taxon>Gammaproteobacteria</taxon>
        <taxon>Enterobacterales</taxon>
        <taxon>Enterobacteriaceae</taxon>
        <taxon>Escherichia</taxon>
    </lineage>
</organism>
<protein>
    <recommendedName>
        <fullName evidence="1">Diaminopimelate epimerase</fullName>
        <shortName evidence="1">DAP epimerase</shortName>
        <ecNumber evidence="1">5.1.1.7</ecNumber>
    </recommendedName>
    <alternativeName>
        <fullName evidence="1">PLP-independent amino acid racemase</fullName>
    </alternativeName>
</protein>